<gene>
    <name type="primary">prl2</name>
</gene>
<name>PRL2_OREMO</name>
<reference key="1">
    <citation type="journal article" date="1989" name="DNA">
        <title>Tilapia prolactin: molecular cloning of two cDNAs and expression in Escherichia coli.</title>
        <authorList>
            <person name="Rentier-Delrue F."/>
            <person name="Swennen D."/>
            <person name="Prunet P."/>
            <person name="Lion M."/>
            <person name="Martial J.A."/>
        </authorList>
    </citation>
    <scope>NUCLEOTIDE SEQUENCE [MRNA]</scope>
    <source>
        <tissue>Pituitary</tissue>
    </source>
</reference>
<reference key="2">
    <citation type="journal article" date="1988" name="J. Biol. Chem.">
        <title>Complete amino acid sequences of a pair of fish (tilapia) prolactins, tPRL177 and tPRL188.</title>
        <authorList>
            <person name="Yamaguchi K."/>
            <person name="Specker J.L."/>
            <person name="King D.S."/>
            <person name="Yokoo Y."/>
            <person name="Nishioka R.S."/>
            <person name="Hirano T."/>
            <person name="Bern H.A."/>
        </authorList>
    </citation>
    <scope>PROTEIN SEQUENCE OF 24-200</scope>
    <source>
        <tissue>Pituitary</tissue>
    </source>
</reference>
<reference key="3">
    <citation type="journal article" date="1985" name="Proc. Natl. Acad. Sci. U.S.A.">
        <title>Isolation and partial characterization of a pair of prolactins released in vitro by the pituitary of a cichlid fish, Oreochromis mossambicus.</title>
        <authorList>
            <person name="Specker J.L."/>
            <person name="King D.S."/>
            <person name="Nishioka R.S."/>
            <person name="Shirahata K."/>
            <person name="Yamaguchi K."/>
            <person name="Bern H.A."/>
        </authorList>
    </citation>
    <scope>PROTEIN SEQUENCE OF 24-52</scope>
    <source>
        <tissue>Pituitary</tissue>
    </source>
</reference>
<organism>
    <name type="scientific">Oreochromis mossambicus</name>
    <name type="common">Mozambique tilapia</name>
    <name type="synonym">Tilapia mossambica</name>
    <dbReference type="NCBI Taxonomy" id="8127"/>
    <lineage>
        <taxon>Eukaryota</taxon>
        <taxon>Metazoa</taxon>
        <taxon>Chordata</taxon>
        <taxon>Craniata</taxon>
        <taxon>Vertebrata</taxon>
        <taxon>Euteleostomi</taxon>
        <taxon>Actinopterygii</taxon>
        <taxon>Neopterygii</taxon>
        <taxon>Teleostei</taxon>
        <taxon>Neoteleostei</taxon>
        <taxon>Acanthomorphata</taxon>
        <taxon>Ovalentaria</taxon>
        <taxon>Cichlomorphae</taxon>
        <taxon>Cichliformes</taxon>
        <taxon>Cichlidae</taxon>
        <taxon>African cichlids</taxon>
        <taxon>Pseudocrenilabrinae</taxon>
        <taxon>Oreochromini</taxon>
        <taxon>Oreochromis</taxon>
    </lineage>
</organism>
<protein>
    <recommendedName>
        <fullName>Prolactin-2</fullName>
    </recommendedName>
    <alternativeName>
        <fullName>PRL-177</fullName>
    </alternativeName>
    <alternativeName>
        <fullName>Prolactin II</fullName>
    </alternativeName>
</protein>
<feature type="signal peptide" evidence="1 2">
    <location>
        <begin position="1"/>
        <end position="23"/>
    </location>
</feature>
<feature type="chain" id="PRO_0000032945" description="Prolactin-2">
    <location>
        <begin position="24"/>
        <end position="200"/>
    </location>
</feature>
<feature type="disulfide bond">
    <location>
        <begin position="64"/>
        <end position="173"/>
    </location>
</feature>
<feature type="disulfide bond">
    <location>
        <begin position="190"/>
        <end position="200"/>
    </location>
</feature>
<feature type="sequence conflict" description="In Ref. 2; AA sequence and 3; AA sequence." evidence="3" ref="2 3">
    <original>S</original>
    <variation>T</variation>
    <location>
        <position position="45"/>
    </location>
</feature>
<accession>P09318</accession>
<comment type="subcellular location">
    <subcellularLocation>
        <location>Secreted</location>
    </subcellularLocation>
</comment>
<comment type="similarity">
    <text evidence="3">Belongs to the somatotropin/prolactin family.</text>
</comment>
<sequence length="200" mass="22183">MRQRRISGSNLMMVLCVVAMCRAVPINDLIYRASQQSDKLHALSSMLTQELGSEAFPIDRVLACHTSSLQTPTDKEQALQVSESDLLSLARSLLQAWSDPLEVLSSSTNVLPYSAQSTLSKTIQKMQEHSKDLKDGLDILSSKMGPAAQTITSLPFIETNEIGQDKITKLLSCFRRDSHKIDSFLKVLRCRAANMQPQVC</sequence>
<dbReference type="EMBL" id="M27011">
    <property type="protein sequence ID" value="AAA53282.1"/>
    <property type="molecule type" value="mRNA"/>
</dbReference>
<dbReference type="PIR" id="A28106">
    <property type="entry name" value="A28106"/>
</dbReference>
<dbReference type="SMR" id="P09318"/>
<dbReference type="KEGG" id="onl:100534523"/>
<dbReference type="GO" id="GO:0005615">
    <property type="term" value="C:extracellular space"/>
    <property type="evidence" value="ECO:0007669"/>
    <property type="project" value="TreeGrafter"/>
</dbReference>
<dbReference type="GO" id="GO:0005179">
    <property type="term" value="F:hormone activity"/>
    <property type="evidence" value="ECO:0007669"/>
    <property type="project" value="UniProtKB-KW"/>
</dbReference>
<dbReference type="GO" id="GO:0008284">
    <property type="term" value="P:positive regulation of cell population proliferation"/>
    <property type="evidence" value="ECO:0007669"/>
    <property type="project" value="TreeGrafter"/>
</dbReference>
<dbReference type="GO" id="GO:0046427">
    <property type="term" value="P:positive regulation of receptor signaling pathway via JAK-STAT"/>
    <property type="evidence" value="ECO:0007669"/>
    <property type="project" value="TreeGrafter"/>
</dbReference>
<dbReference type="GO" id="GO:0031667">
    <property type="term" value="P:response to nutrient levels"/>
    <property type="evidence" value="ECO:0007669"/>
    <property type="project" value="TreeGrafter"/>
</dbReference>
<dbReference type="Gene3D" id="1.20.1250.10">
    <property type="match status" value="1"/>
</dbReference>
<dbReference type="InterPro" id="IPR009079">
    <property type="entry name" value="4_helix_cytokine-like_core"/>
</dbReference>
<dbReference type="InterPro" id="IPR001400">
    <property type="entry name" value="Somatotropin/Prolactin"/>
</dbReference>
<dbReference type="InterPro" id="IPR018116">
    <property type="entry name" value="Somatotropin_CS"/>
</dbReference>
<dbReference type="PANTHER" id="PTHR11417:SF5">
    <property type="entry name" value="PROLACTIN"/>
    <property type="match status" value="1"/>
</dbReference>
<dbReference type="PANTHER" id="PTHR11417">
    <property type="entry name" value="SOMATOTROPIN,PROLACTIN"/>
    <property type="match status" value="1"/>
</dbReference>
<dbReference type="Pfam" id="PF00103">
    <property type="entry name" value="Hormone_1"/>
    <property type="match status" value="1"/>
</dbReference>
<dbReference type="PRINTS" id="PR00836">
    <property type="entry name" value="SOMATOTROPIN"/>
</dbReference>
<dbReference type="SUPFAM" id="SSF47266">
    <property type="entry name" value="4-helical cytokines"/>
    <property type="match status" value="1"/>
</dbReference>
<dbReference type="PROSITE" id="PS00266">
    <property type="entry name" value="SOMATOTROPIN_1"/>
    <property type="match status" value="1"/>
</dbReference>
<dbReference type="PROSITE" id="PS00338">
    <property type="entry name" value="SOMATOTROPIN_2"/>
    <property type="match status" value="1"/>
</dbReference>
<proteinExistence type="evidence at protein level"/>
<evidence type="ECO:0000269" key="1">
    <source>
    </source>
</evidence>
<evidence type="ECO:0000269" key="2">
    <source>
    </source>
</evidence>
<evidence type="ECO:0000305" key="3"/>
<keyword id="KW-0903">Direct protein sequencing</keyword>
<keyword id="KW-1015">Disulfide bond</keyword>
<keyword id="KW-0372">Hormone</keyword>
<keyword id="KW-0964">Secreted</keyword>
<keyword id="KW-0732">Signal</keyword>